<evidence type="ECO:0000255" key="1">
    <source>
        <dbReference type="HAMAP-Rule" id="MF_02205"/>
    </source>
</evidence>
<evidence type="ECO:0000305" key="2"/>
<name>DING_SHIFL</name>
<accession>Q83LU7</accession>
<accession>Q7UD89</accession>
<proteinExistence type="inferred from homology"/>
<protein>
    <recommendedName>
        <fullName evidence="1">ATP-dependent DNA helicase DinG</fullName>
        <ecNumber evidence="1">5.6.2.3</ecNumber>
    </recommendedName>
    <alternativeName>
        <fullName evidence="1">DNA 5'-3' helicase subunit DinG</fullName>
    </alternativeName>
</protein>
<sequence>MALTAALKAQIAAWYKALQEQIPDFIPRAPQRQMIADVAKTLAGEEGRHLAIEAPTGVGKTLSYLIPGIAIAREEQKTLVVSTANVALQDQIYSKDLPLLKKIIPDLKFTAAFGRGRYVCPRNLTALASTEPTQQDLLAFLDDELTPNNQEEQKRCAKLKGDLDTYKWDGLRDHTDIAIDDDLWRRLSTDKASCLNRNCYYYRECPFFVTRREIQEAEVVVANHALVMAAMESEAVLPDPKNLLLVLDEGHHLPDVARDALEMSAEITVPWYRLQLDLFTKLVATCMEQFRPKTIPPLAIPERLNAHCEELYELIASLNNILNLYMPAGQEAEHRFAMGELPDELLEICQRLAKLTEMLRGLAELFLNDLSEKTGSHDIVRLHRLILQMNRALGMFEVQSKLWRLASLAQSSGAPVTKWATREEREGQLHLWFHCVGIRVSDQLERLLWRSIPHIIVTSATLRSLNSFSRLQEMSGLKEKAGDRFVALDSPFNHCEQGKIVIPRMRFEPSIDNEEQHIAEMAAFFREQVESKKYLGMLVLFASGRAMQRFLDYVTDLRLMLLVQGDQPRYRLVELHRKRVANGERSVLVGLQSFAEGLDLKGDLLSQVHIHKIAFPPIDSPVVITEGEWLKSLNRYPFEVQSLPSASFNLIQQVGRLIRSHGCWGEVVIYDKRLLTKNYGKRLLDALPVFPIEQPEVPEGIVKKKEKTKSPRRRRR</sequence>
<gene>
    <name evidence="1" type="primary">dinG</name>
    <name type="ordered locus">SF0748</name>
    <name type="ordered locus">S0790</name>
</gene>
<keyword id="KW-0004">4Fe-4S</keyword>
<keyword id="KW-0067">ATP-binding</keyword>
<keyword id="KW-0238">DNA-binding</keyword>
<keyword id="KW-0347">Helicase</keyword>
<keyword id="KW-0378">Hydrolase</keyword>
<keyword id="KW-0408">Iron</keyword>
<keyword id="KW-0411">Iron-sulfur</keyword>
<keyword id="KW-0413">Isomerase</keyword>
<keyword id="KW-0479">Metal-binding</keyword>
<keyword id="KW-0547">Nucleotide-binding</keyword>
<keyword id="KW-1185">Reference proteome</keyword>
<dbReference type="EC" id="5.6.2.3" evidence="1"/>
<dbReference type="EMBL" id="AE005674">
    <property type="protein sequence ID" value="AAN42384.2"/>
    <property type="molecule type" value="Genomic_DNA"/>
</dbReference>
<dbReference type="EMBL" id="AE014073">
    <property type="protein sequence ID" value="AAP16261.1"/>
    <property type="molecule type" value="Genomic_DNA"/>
</dbReference>
<dbReference type="RefSeq" id="NP_706677.2">
    <property type="nucleotide sequence ID" value="NC_004337.2"/>
</dbReference>
<dbReference type="RefSeq" id="WP_005048497.1">
    <property type="nucleotide sequence ID" value="NZ_WPGW01000030.1"/>
</dbReference>
<dbReference type="SMR" id="Q83LU7"/>
<dbReference type="STRING" id="198214.SF0748"/>
<dbReference type="PaxDb" id="198214-SF0748"/>
<dbReference type="GeneID" id="1023745"/>
<dbReference type="KEGG" id="sfl:SF0748"/>
<dbReference type="KEGG" id="sfx:S0790"/>
<dbReference type="PATRIC" id="fig|198214.7.peg.870"/>
<dbReference type="HOGENOM" id="CLU_012117_4_1_6"/>
<dbReference type="Proteomes" id="UP000001006">
    <property type="component" value="Chromosome"/>
</dbReference>
<dbReference type="Proteomes" id="UP000002673">
    <property type="component" value="Chromosome"/>
</dbReference>
<dbReference type="GO" id="GO:0051539">
    <property type="term" value="F:4 iron, 4 sulfur cluster binding"/>
    <property type="evidence" value="ECO:0007669"/>
    <property type="project" value="UniProtKB-UniRule"/>
</dbReference>
<dbReference type="GO" id="GO:0043139">
    <property type="term" value="F:5'-3' DNA helicase activity"/>
    <property type="evidence" value="ECO:0007669"/>
    <property type="project" value="UniProtKB-UniRule"/>
</dbReference>
<dbReference type="GO" id="GO:0005524">
    <property type="term" value="F:ATP binding"/>
    <property type="evidence" value="ECO:0007669"/>
    <property type="project" value="UniProtKB-UniRule"/>
</dbReference>
<dbReference type="GO" id="GO:0016887">
    <property type="term" value="F:ATP hydrolysis activity"/>
    <property type="evidence" value="ECO:0007669"/>
    <property type="project" value="RHEA"/>
</dbReference>
<dbReference type="GO" id="GO:0003677">
    <property type="term" value="F:DNA binding"/>
    <property type="evidence" value="ECO:0007669"/>
    <property type="project" value="UniProtKB-UniRule"/>
</dbReference>
<dbReference type="GO" id="GO:0033677">
    <property type="term" value="F:DNA/RNA helicase activity"/>
    <property type="evidence" value="ECO:0007669"/>
    <property type="project" value="TreeGrafter"/>
</dbReference>
<dbReference type="GO" id="GO:0046872">
    <property type="term" value="F:metal ion binding"/>
    <property type="evidence" value="ECO:0007669"/>
    <property type="project" value="UniProtKB-KW"/>
</dbReference>
<dbReference type="GO" id="GO:0006281">
    <property type="term" value="P:DNA repair"/>
    <property type="evidence" value="ECO:0007669"/>
    <property type="project" value="TreeGrafter"/>
</dbReference>
<dbReference type="GO" id="GO:0009432">
    <property type="term" value="P:SOS response"/>
    <property type="evidence" value="ECO:0007669"/>
    <property type="project" value="TreeGrafter"/>
</dbReference>
<dbReference type="FunFam" id="3.40.50.300:FF:000685">
    <property type="entry name" value="ATP-dependent DNA helicase DinG"/>
    <property type="match status" value="1"/>
</dbReference>
<dbReference type="FunFam" id="3.40.50.300:FF:000700">
    <property type="entry name" value="ATP-dependent DNA helicase DinG"/>
    <property type="match status" value="1"/>
</dbReference>
<dbReference type="Gene3D" id="3.40.50.300">
    <property type="entry name" value="P-loop containing nucleotide triphosphate hydrolases"/>
    <property type="match status" value="2"/>
</dbReference>
<dbReference type="HAMAP" id="MF_02205">
    <property type="entry name" value="DinG_proteobact"/>
    <property type="match status" value="1"/>
</dbReference>
<dbReference type="InterPro" id="IPR006555">
    <property type="entry name" value="ATP-dep_Helicase_C"/>
</dbReference>
<dbReference type="InterPro" id="IPR011545">
    <property type="entry name" value="DEAD/DEAH_box_helicase_dom"/>
</dbReference>
<dbReference type="InterPro" id="IPR045028">
    <property type="entry name" value="DinG/Rad3-like"/>
</dbReference>
<dbReference type="InterPro" id="IPR039000">
    <property type="entry name" value="DinG_proteobact"/>
</dbReference>
<dbReference type="InterPro" id="IPR014013">
    <property type="entry name" value="Helic_SF1/SF2_ATP-bd_DinG/Rad3"/>
</dbReference>
<dbReference type="InterPro" id="IPR006554">
    <property type="entry name" value="Helicase-like_DEXD_c2"/>
</dbReference>
<dbReference type="InterPro" id="IPR014001">
    <property type="entry name" value="Helicase_ATP-bd"/>
</dbReference>
<dbReference type="InterPro" id="IPR027417">
    <property type="entry name" value="P-loop_NTPase"/>
</dbReference>
<dbReference type="InterPro" id="IPR010614">
    <property type="entry name" value="RAD3-like_helicase_DEAD"/>
</dbReference>
<dbReference type="NCBIfam" id="NF008729">
    <property type="entry name" value="PRK11747.1"/>
    <property type="match status" value="1"/>
</dbReference>
<dbReference type="PANTHER" id="PTHR11472:SF59">
    <property type="entry name" value="ATP-DEPENDENT DNA HELICASE DING"/>
    <property type="match status" value="1"/>
</dbReference>
<dbReference type="PANTHER" id="PTHR11472">
    <property type="entry name" value="DNA REPAIR DEAD HELICASE RAD3/XP-D SUBFAMILY MEMBER"/>
    <property type="match status" value="1"/>
</dbReference>
<dbReference type="Pfam" id="PF00270">
    <property type="entry name" value="DEAD"/>
    <property type="match status" value="1"/>
</dbReference>
<dbReference type="Pfam" id="PF06733">
    <property type="entry name" value="DEAD_2"/>
    <property type="match status" value="1"/>
</dbReference>
<dbReference type="Pfam" id="PF13307">
    <property type="entry name" value="Helicase_C_2"/>
    <property type="match status" value="1"/>
</dbReference>
<dbReference type="SMART" id="SM00487">
    <property type="entry name" value="DEXDc"/>
    <property type="match status" value="1"/>
</dbReference>
<dbReference type="SMART" id="SM00488">
    <property type="entry name" value="DEXDc2"/>
    <property type="match status" value="1"/>
</dbReference>
<dbReference type="SMART" id="SM00491">
    <property type="entry name" value="HELICc2"/>
    <property type="match status" value="1"/>
</dbReference>
<dbReference type="SUPFAM" id="SSF52540">
    <property type="entry name" value="P-loop containing nucleoside triphosphate hydrolases"/>
    <property type="match status" value="1"/>
</dbReference>
<dbReference type="PROSITE" id="PS51193">
    <property type="entry name" value="HELICASE_ATP_BIND_2"/>
    <property type="match status" value="1"/>
</dbReference>
<dbReference type="PROSITE" id="PS51194">
    <property type="entry name" value="HELICASE_CTER"/>
    <property type="match status" value="1"/>
</dbReference>
<comment type="function">
    <text evidence="1">DNA-dependent ATPase and 5'-3' DNA helicase. Unwinds D-loops, R-loops, forked DNA and G-quadruplex DNA.</text>
</comment>
<comment type="catalytic activity">
    <reaction evidence="1">
        <text>Couples ATP hydrolysis with the unwinding of duplex DNA at the replication fork by translocating in the 5'-3' direction. This creates two antiparallel DNA single strands (ssDNA). The leading ssDNA polymer is the template for DNA polymerase III holoenzyme which synthesizes a continuous strand.</text>
        <dbReference type="EC" id="5.6.2.3"/>
    </reaction>
</comment>
<comment type="catalytic activity">
    <reaction evidence="1">
        <text>ATP + H2O = ADP + phosphate + H(+)</text>
        <dbReference type="Rhea" id="RHEA:13065"/>
        <dbReference type="ChEBI" id="CHEBI:15377"/>
        <dbReference type="ChEBI" id="CHEBI:15378"/>
        <dbReference type="ChEBI" id="CHEBI:30616"/>
        <dbReference type="ChEBI" id="CHEBI:43474"/>
        <dbReference type="ChEBI" id="CHEBI:456216"/>
        <dbReference type="EC" id="5.6.2.3"/>
    </reaction>
</comment>
<comment type="cofactor">
    <cofactor evidence="1">
        <name>[4Fe-4S] cluster</name>
        <dbReference type="ChEBI" id="CHEBI:49883"/>
    </cofactor>
    <text evidence="1">Binds 1 [4Fe-4S] cluster.</text>
</comment>
<comment type="similarity">
    <text evidence="1">Belongs to the helicase family. DinG subfamily. Type 1 sub-subfamily.</text>
</comment>
<feature type="chain" id="PRO_0000102002" description="ATP-dependent DNA helicase DinG">
    <location>
        <begin position="1"/>
        <end position="716"/>
    </location>
</feature>
<feature type="domain" description="Helicase ATP-binding" evidence="1">
    <location>
        <begin position="17"/>
        <end position="294"/>
    </location>
</feature>
<feature type="domain" description="Helicase C-terminal" evidence="1">
    <location>
        <begin position="487"/>
        <end position="698"/>
    </location>
</feature>
<feature type="short sequence motif" description="DEAH box" evidence="1">
    <location>
        <begin position="131"/>
        <end position="134"/>
    </location>
</feature>
<feature type="short sequence motif" description="DEAH box" evidence="1">
    <location>
        <begin position="248"/>
        <end position="251"/>
    </location>
</feature>
<feature type="binding site" evidence="1 2">
    <location>
        <begin position="54"/>
        <end position="61"/>
    </location>
    <ligand>
        <name>ATP</name>
        <dbReference type="ChEBI" id="CHEBI:30616"/>
    </ligand>
</feature>
<feature type="binding site" evidence="1">
    <location>
        <position position="120"/>
    </location>
    <ligand>
        <name>[4Fe-4S] cluster</name>
        <dbReference type="ChEBI" id="CHEBI:49883"/>
    </ligand>
</feature>
<feature type="binding site" evidence="1">
    <location>
        <position position="194"/>
    </location>
    <ligand>
        <name>[4Fe-4S] cluster</name>
        <dbReference type="ChEBI" id="CHEBI:49883"/>
    </ligand>
</feature>
<feature type="binding site" evidence="1">
    <location>
        <position position="199"/>
    </location>
    <ligand>
        <name>[4Fe-4S] cluster</name>
        <dbReference type="ChEBI" id="CHEBI:49883"/>
    </ligand>
</feature>
<feature type="binding site" evidence="1">
    <location>
        <position position="205"/>
    </location>
    <ligand>
        <name>[4Fe-4S] cluster</name>
        <dbReference type="ChEBI" id="CHEBI:49883"/>
    </ligand>
</feature>
<organism>
    <name type="scientific">Shigella flexneri</name>
    <dbReference type="NCBI Taxonomy" id="623"/>
    <lineage>
        <taxon>Bacteria</taxon>
        <taxon>Pseudomonadati</taxon>
        <taxon>Pseudomonadota</taxon>
        <taxon>Gammaproteobacteria</taxon>
        <taxon>Enterobacterales</taxon>
        <taxon>Enterobacteriaceae</taxon>
        <taxon>Shigella</taxon>
    </lineage>
</organism>
<reference key="1">
    <citation type="journal article" date="2002" name="Nucleic Acids Res.">
        <title>Genome sequence of Shigella flexneri 2a: insights into pathogenicity through comparison with genomes of Escherichia coli K12 and O157.</title>
        <authorList>
            <person name="Jin Q."/>
            <person name="Yuan Z."/>
            <person name="Xu J."/>
            <person name="Wang Y."/>
            <person name="Shen Y."/>
            <person name="Lu W."/>
            <person name="Wang J."/>
            <person name="Liu H."/>
            <person name="Yang J."/>
            <person name="Yang F."/>
            <person name="Zhang X."/>
            <person name="Zhang J."/>
            <person name="Yang G."/>
            <person name="Wu H."/>
            <person name="Qu D."/>
            <person name="Dong J."/>
            <person name="Sun L."/>
            <person name="Xue Y."/>
            <person name="Zhao A."/>
            <person name="Gao Y."/>
            <person name="Zhu J."/>
            <person name="Kan B."/>
            <person name="Ding K."/>
            <person name="Chen S."/>
            <person name="Cheng H."/>
            <person name="Yao Z."/>
            <person name="He B."/>
            <person name="Chen R."/>
            <person name="Ma D."/>
            <person name="Qiang B."/>
            <person name="Wen Y."/>
            <person name="Hou Y."/>
            <person name="Yu J."/>
        </authorList>
    </citation>
    <scope>NUCLEOTIDE SEQUENCE [LARGE SCALE GENOMIC DNA]</scope>
    <source>
        <strain>301 / Serotype 2a</strain>
    </source>
</reference>
<reference key="2">
    <citation type="journal article" date="2003" name="Infect. Immun.">
        <title>Complete genome sequence and comparative genomics of Shigella flexneri serotype 2a strain 2457T.</title>
        <authorList>
            <person name="Wei J."/>
            <person name="Goldberg M.B."/>
            <person name="Burland V."/>
            <person name="Venkatesan M.M."/>
            <person name="Deng W."/>
            <person name="Fournier G."/>
            <person name="Mayhew G.F."/>
            <person name="Plunkett G. III"/>
            <person name="Rose D.J."/>
            <person name="Darling A."/>
            <person name="Mau B."/>
            <person name="Perna N.T."/>
            <person name="Payne S.M."/>
            <person name="Runyen-Janecky L.J."/>
            <person name="Zhou S."/>
            <person name="Schwartz D.C."/>
            <person name="Blattner F.R."/>
        </authorList>
    </citation>
    <scope>NUCLEOTIDE SEQUENCE [LARGE SCALE GENOMIC DNA]</scope>
    <source>
        <strain>ATCC 700930 / 2457T / Serotype 2a</strain>
    </source>
</reference>